<protein>
    <recommendedName>
        <fullName>Variant-specific surface protein VSP4A1</fullName>
    </recommendedName>
    <alternativeName>
        <fullName>CRISP-90</fullName>
    </alternativeName>
</protein>
<proteinExistence type="evidence at protein level"/>
<evidence type="ECO:0000255" key="1"/>
<evidence type="ECO:0000305" key="2"/>
<keyword id="KW-1003">Cell membrane</keyword>
<keyword id="KW-0325">Glycoprotein</keyword>
<keyword id="KW-0449">Lipoprotein</keyword>
<keyword id="KW-0472">Membrane</keyword>
<keyword id="KW-0564">Palmitate</keyword>
<keyword id="KW-0677">Repeat</keyword>
<keyword id="KW-0732">Signal</keyword>
<keyword id="KW-0812">Transmembrane</keyword>
<keyword id="KW-1133">Transmembrane helix</keyword>
<dbReference type="EMBL" id="Z83743">
    <property type="protein sequence ID" value="CAB06038.1"/>
    <property type="molecule type" value="Genomic_DNA"/>
</dbReference>
<dbReference type="GlyConnect" id="614">
    <property type="glycosylation" value="1 O-Linked glycan"/>
</dbReference>
<dbReference type="SwissPalm" id="P92127"/>
<dbReference type="VEuPathDB" id="GiardiaDB:DHA2_150135"/>
<dbReference type="VEuPathDB" id="GiardiaDB:GL50581_2487"/>
<dbReference type="VEuPathDB" id="GiardiaDB:GL50581_2604"/>
<dbReference type="VEuPathDB" id="GiardiaDB:GL50581_3335"/>
<dbReference type="VEuPathDB" id="GiardiaDB:GL50803_00137614"/>
<dbReference type="VEuPathDB" id="GiardiaDB:QR46_3107"/>
<dbReference type="VEuPathDB" id="GiardiaDB:QR46_4773"/>
<dbReference type="GO" id="GO:0005886">
    <property type="term" value="C:plasma membrane"/>
    <property type="evidence" value="ECO:0007669"/>
    <property type="project" value="UniProtKB-SubCell"/>
</dbReference>
<dbReference type="CDD" id="cd00064">
    <property type="entry name" value="FU"/>
    <property type="match status" value="1"/>
</dbReference>
<dbReference type="Gene3D" id="2.10.220.10">
    <property type="entry name" value="Hormone Receptor, Insulin-like Growth Factor Receptor 1, Chain A, domain 2"/>
    <property type="match status" value="2"/>
</dbReference>
<dbReference type="InterPro" id="IPR000742">
    <property type="entry name" value="EGF-like_dom"/>
</dbReference>
<dbReference type="InterPro" id="IPR006212">
    <property type="entry name" value="Furin_repeat"/>
</dbReference>
<dbReference type="InterPro" id="IPR052798">
    <property type="entry name" value="Giardia_VSA"/>
</dbReference>
<dbReference type="InterPro" id="IPR005127">
    <property type="entry name" value="Giardia_VSP"/>
</dbReference>
<dbReference type="InterPro" id="IPR009030">
    <property type="entry name" value="Growth_fac_rcpt_cys_sf"/>
</dbReference>
<dbReference type="PANTHER" id="PTHR23275">
    <property type="entry name" value="CABRIOLET.-RELATED"/>
    <property type="match status" value="1"/>
</dbReference>
<dbReference type="PANTHER" id="PTHR23275:SF100">
    <property type="entry name" value="EGF-LIKE DOMAIN-CONTAINING PROTEIN"/>
    <property type="match status" value="1"/>
</dbReference>
<dbReference type="Pfam" id="PF03302">
    <property type="entry name" value="VSP"/>
    <property type="match status" value="1"/>
</dbReference>
<dbReference type="SMART" id="SM00181">
    <property type="entry name" value="EGF"/>
    <property type="match status" value="4"/>
</dbReference>
<dbReference type="SMART" id="SM00261">
    <property type="entry name" value="FU"/>
    <property type="match status" value="4"/>
</dbReference>
<dbReference type="SUPFAM" id="SSF57184">
    <property type="entry name" value="Growth factor receptor domain"/>
    <property type="match status" value="4"/>
</dbReference>
<feature type="signal peptide" evidence="1">
    <location>
        <begin position="1"/>
        <end position="14"/>
    </location>
</feature>
<feature type="chain" id="PRO_0000036461" description="Variant-specific surface protein VSP4A1">
    <location>
        <begin position="15"/>
        <end position="687"/>
    </location>
</feature>
<feature type="topological domain" description="Extracellular" evidence="1">
    <location>
        <begin position="15"/>
        <end position="660"/>
    </location>
</feature>
<feature type="transmembrane region" description="Helical" evidence="1">
    <location>
        <begin position="661"/>
        <end position="681"/>
    </location>
</feature>
<feature type="topological domain" description="Cytoplasmic" evidence="1">
    <location>
        <begin position="682"/>
        <end position="687"/>
    </location>
</feature>
<accession>P92127</accession>
<name>VS41_GIAIN</name>
<reference key="1">
    <citation type="journal article" date="1997" name="Mol. Biochem. Parasitol.">
        <title>Primary structure and biochemical properties of a variant-specific surface protein of Giardia.</title>
        <authorList>
            <person name="Papanastasiou P."/>
            <person name="Bruderer T."/>
            <person name="Li Y."/>
            <person name="Bommeli C."/>
            <person name="Koehler P."/>
        </authorList>
    </citation>
    <scope>NUCLEOTIDE SEQUENCE [GENOMIC DNA]</scope>
    <source>
        <strain>O2-4A1</strain>
    </source>
</reference>
<reference key="2">
    <citation type="journal article" date="1997" name="Biochem. J.">
        <title>The variant-specific surface protein of Giardia, VSP4A1, is a glycosylated and palmitoylated protein.</title>
        <authorList>
            <person name="Papanastasiou P."/>
            <person name="McConville M.J."/>
            <person name="Ralton J."/>
            <person name="Koehler P."/>
        </authorList>
    </citation>
    <scope>CHARACTERIZATION</scope>
</reference>
<comment type="subcellular location">
    <subcellularLocation>
        <location>Cell membrane</location>
        <topology>Single-pass type I membrane protein</topology>
    </subcellularLocation>
</comment>
<comment type="PTM">
    <text>O-glycosylated. The major glycan is a trisaccharide with Glc at the reducing terminus.</text>
</comment>
<comment type="PTM">
    <text>Palmitoylated.</text>
</comment>
<comment type="similarity">
    <text evidence="2">Belongs to the Giardia variant surface protein family.</text>
</comment>
<organism>
    <name type="scientific">Giardia intestinalis</name>
    <name type="common">Giardia lamblia</name>
    <dbReference type="NCBI Taxonomy" id="5741"/>
    <lineage>
        <taxon>Eukaryota</taxon>
        <taxon>Metamonada</taxon>
        <taxon>Diplomonadida</taxon>
        <taxon>Hexamitidae</taxon>
        <taxon>Giardiinae</taxon>
        <taxon>Giardia</taxon>
    </lineage>
</organism>
<sequence length="687" mass="70857">MLLTAFYVVLGSFAAPCQQDGDHIVTCQVNKCETVGLFEICTECKTGGVPVDGFCRPFGSIQAAAAGCTKADGTALDKTATTCGKCGDGYFLFMGGCYKTESQPGSEICTTASNGLCTACKVDSQYIFQNKATPSEKGSECILCWDTTDRNGVMGVANCATCTAPASSTGPATCTECMAGTYKKSDTECAACHSDCATCSGEANNQCTSCETGKYLKSNQCVEKNTCNTNHYPDDTSMTCVACTVLDANCATCSFDSATAKGKCLTCNSNKIPRTTLDGTSTCVENSYAGCQGADNELFMKEDQSACLLCGDTKEASNDKGVANCRTCTKNANDSPPTCTACLDGYFLERGSCTTTCADNCATCSEATTEDKCKICKAGFFLASPGEGKCISCSDTNNGGIDGCAECTKEPAGPLKCTKCKPNRKPAGTSDNYTCTEKTCEDPTVCGGTSGACDAIVIDANGKEHYYCSYCGETNKFPIDGLCTDNKGTNAGCTDHTCSYCAAGFFLYMGGCYKIDTVPGSYMCSKSTTAGVCDTPNANNRFFVVPKAISAEQSVLACGNPLGTIAGGNAYVGVEGCSQCTAPDARADGGMAVATCTACEDGKKPGKSGTGCVACPDANCKSCTMDDVCEECADGFSLDNGKCVSSGTNKSGLSTGAIAGISVAAIVVVGGLVGFLCWWFICRGKAQ</sequence>